<organism>
    <name type="scientific">Shewanella sp. (strain ANA-3)</name>
    <dbReference type="NCBI Taxonomy" id="94122"/>
    <lineage>
        <taxon>Bacteria</taxon>
        <taxon>Pseudomonadati</taxon>
        <taxon>Pseudomonadota</taxon>
        <taxon>Gammaproteobacteria</taxon>
        <taxon>Alteromonadales</taxon>
        <taxon>Shewanellaceae</taxon>
        <taxon>Shewanella</taxon>
    </lineage>
</organism>
<proteinExistence type="inferred from homology"/>
<evidence type="ECO:0000255" key="1">
    <source>
        <dbReference type="HAMAP-Rule" id="MF_01309"/>
    </source>
</evidence>
<evidence type="ECO:0000305" key="2"/>
<accession>A0KRN0</accession>
<sequence length="230" mass="25755">MGQKVHPNGIRLGITKPWISTWYADKSDYANNLNSDWEVRKYLADKLQAASVSKIVIERPAKSIRVTIHTARPGVVIGKKGEDVEVLRAAVSKLAGTPAQINIAEIRKPELDAKLVADSIAQQLERRVMFRRAMKRAVQNAMRIGAQGIKVEVSGRLGGAEIARSEWYREGRVPLHTLRADIDYSTSESHTQYGVIGIKVWIFKGEVLDGMLPQIEEPKQQQPKRKPRGK</sequence>
<gene>
    <name evidence="1" type="primary">rpsC</name>
    <name type="ordered locus">Shewana3_0205</name>
</gene>
<keyword id="KW-0687">Ribonucleoprotein</keyword>
<keyword id="KW-0689">Ribosomal protein</keyword>
<keyword id="KW-0694">RNA-binding</keyword>
<keyword id="KW-0699">rRNA-binding</keyword>
<reference key="1">
    <citation type="submission" date="2006-09" db="EMBL/GenBank/DDBJ databases">
        <title>Complete sequence of chromosome 1 of Shewanella sp. ANA-3.</title>
        <authorList>
            <person name="Copeland A."/>
            <person name="Lucas S."/>
            <person name="Lapidus A."/>
            <person name="Barry K."/>
            <person name="Detter J.C."/>
            <person name="Glavina del Rio T."/>
            <person name="Hammon N."/>
            <person name="Israni S."/>
            <person name="Dalin E."/>
            <person name="Tice H."/>
            <person name="Pitluck S."/>
            <person name="Chertkov O."/>
            <person name="Brettin T."/>
            <person name="Bruce D."/>
            <person name="Han C."/>
            <person name="Tapia R."/>
            <person name="Gilna P."/>
            <person name="Schmutz J."/>
            <person name="Larimer F."/>
            <person name="Land M."/>
            <person name="Hauser L."/>
            <person name="Kyrpides N."/>
            <person name="Kim E."/>
            <person name="Newman D."/>
            <person name="Salticov C."/>
            <person name="Konstantinidis K."/>
            <person name="Klappenback J."/>
            <person name="Tiedje J."/>
            <person name="Richardson P."/>
        </authorList>
    </citation>
    <scope>NUCLEOTIDE SEQUENCE [LARGE SCALE GENOMIC DNA]</scope>
    <source>
        <strain>ANA-3</strain>
    </source>
</reference>
<name>RS3_SHESA</name>
<feature type="chain" id="PRO_0000293882" description="Small ribosomal subunit protein uS3">
    <location>
        <begin position="1"/>
        <end position="230"/>
    </location>
</feature>
<feature type="domain" description="KH type-2" evidence="1">
    <location>
        <begin position="39"/>
        <end position="107"/>
    </location>
</feature>
<protein>
    <recommendedName>
        <fullName evidence="1">Small ribosomal subunit protein uS3</fullName>
    </recommendedName>
    <alternativeName>
        <fullName evidence="2">30S ribosomal protein S3</fullName>
    </alternativeName>
</protein>
<comment type="function">
    <text evidence="1">Binds the lower part of the 30S subunit head. Binds mRNA in the 70S ribosome, positioning it for translation.</text>
</comment>
<comment type="subunit">
    <text evidence="1">Part of the 30S ribosomal subunit. Forms a tight complex with proteins S10 and S14.</text>
</comment>
<comment type="similarity">
    <text evidence="1">Belongs to the universal ribosomal protein uS3 family.</text>
</comment>
<dbReference type="EMBL" id="CP000469">
    <property type="protein sequence ID" value="ABK46449.1"/>
    <property type="molecule type" value="Genomic_DNA"/>
</dbReference>
<dbReference type="RefSeq" id="WP_011070621.1">
    <property type="nucleotide sequence ID" value="NC_008577.1"/>
</dbReference>
<dbReference type="SMR" id="A0KRN0"/>
<dbReference type="STRING" id="94122.Shewana3_0205"/>
<dbReference type="GeneID" id="94726192"/>
<dbReference type="KEGG" id="shn:Shewana3_0205"/>
<dbReference type="eggNOG" id="COG0092">
    <property type="taxonomic scope" value="Bacteria"/>
</dbReference>
<dbReference type="HOGENOM" id="CLU_058591_0_2_6"/>
<dbReference type="OrthoDB" id="9806396at2"/>
<dbReference type="Proteomes" id="UP000002589">
    <property type="component" value="Chromosome"/>
</dbReference>
<dbReference type="GO" id="GO:0022627">
    <property type="term" value="C:cytosolic small ribosomal subunit"/>
    <property type="evidence" value="ECO:0007669"/>
    <property type="project" value="TreeGrafter"/>
</dbReference>
<dbReference type="GO" id="GO:0003729">
    <property type="term" value="F:mRNA binding"/>
    <property type="evidence" value="ECO:0007669"/>
    <property type="project" value="UniProtKB-UniRule"/>
</dbReference>
<dbReference type="GO" id="GO:0019843">
    <property type="term" value="F:rRNA binding"/>
    <property type="evidence" value="ECO:0007669"/>
    <property type="project" value="UniProtKB-UniRule"/>
</dbReference>
<dbReference type="GO" id="GO:0003735">
    <property type="term" value="F:structural constituent of ribosome"/>
    <property type="evidence" value="ECO:0007669"/>
    <property type="project" value="InterPro"/>
</dbReference>
<dbReference type="GO" id="GO:0006412">
    <property type="term" value="P:translation"/>
    <property type="evidence" value="ECO:0007669"/>
    <property type="project" value="UniProtKB-UniRule"/>
</dbReference>
<dbReference type="CDD" id="cd02412">
    <property type="entry name" value="KH-II_30S_S3"/>
    <property type="match status" value="1"/>
</dbReference>
<dbReference type="FunFam" id="3.30.1140.32:FF:000001">
    <property type="entry name" value="30S ribosomal protein S3"/>
    <property type="match status" value="1"/>
</dbReference>
<dbReference type="FunFam" id="3.30.300.20:FF:000001">
    <property type="entry name" value="30S ribosomal protein S3"/>
    <property type="match status" value="1"/>
</dbReference>
<dbReference type="Gene3D" id="3.30.300.20">
    <property type="match status" value="1"/>
</dbReference>
<dbReference type="Gene3D" id="3.30.1140.32">
    <property type="entry name" value="Ribosomal protein S3, C-terminal domain"/>
    <property type="match status" value="1"/>
</dbReference>
<dbReference type="HAMAP" id="MF_01309_B">
    <property type="entry name" value="Ribosomal_uS3_B"/>
    <property type="match status" value="1"/>
</dbReference>
<dbReference type="InterPro" id="IPR004087">
    <property type="entry name" value="KH_dom"/>
</dbReference>
<dbReference type="InterPro" id="IPR015946">
    <property type="entry name" value="KH_dom-like_a/b"/>
</dbReference>
<dbReference type="InterPro" id="IPR004044">
    <property type="entry name" value="KH_dom_type_2"/>
</dbReference>
<dbReference type="InterPro" id="IPR009019">
    <property type="entry name" value="KH_sf_prok-type"/>
</dbReference>
<dbReference type="InterPro" id="IPR036419">
    <property type="entry name" value="Ribosomal_S3_C_sf"/>
</dbReference>
<dbReference type="InterPro" id="IPR005704">
    <property type="entry name" value="Ribosomal_uS3_bac-typ"/>
</dbReference>
<dbReference type="InterPro" id="IPR001351">
    <property type="entry name" value="Ribosomal_uS3_C"/>
</dbReference>
<dbReference type="InterPro" id="IPR018280">
    <property type="entry name" value="Ribosomal_uS3_CS"/>
</dbReference>
<dbReference type="NCBIfam" id="TIGR01009">
    <property type="entry name" value="rpsC_bact"/>
    <property type="match status" value="1"/>
</dbReference>
<dbReference type="PANTHER" id="PTHR11760">
    <property type="entry name" value="30S/40S RIBOSOMAL PROTEIN S3"/>
    <property type="match status" value="1"/>
</dbReference>
<dbReference type="PANTHER" id="PTHR11760:SF19">
    <property type="entry name" value="SMALL RIBOSOMAL SUBUNIT PROTEIN US3C"/>
    <property type="match status" value="1"/>
</dbReference>
<dbReference type="Pfam" id="PF07650">
    <property type="entry name" value="KH_2"/>
    <property type="match status" value="1"/>
</dbReference>
<dbReference type="Pfam" id="PF00189">
    <property type="entry name" value="Ribosomal_S3_C"/>
    <property type="match status" value="1"/>
</dbReference>
<dbReference type="SMART" id="SM00322">
    <property type="entry name" value="KH"/>
    <property type="match status" value="1"/>
</dbReference>
<dbReference type="SUPFAM" id="SSF54814">
    <property type="entry name" value="Prokaryotic type KH domain (KH-domain type II)"/>
    <property type="match status" value="1"/>
</dbReference>
<dbReference type="SUPFAM" id="SSF54821">
    <property type="entry name" value="Ribosomal protein S3 C-terminal domain"/>
    <property type="match status" value="1"/>
</dbReference>
<dbReference type="PROSITE" id="PS50823">
    <property type="entry name" value="KH_TYPE_2"/>
    <property type="match status" value="1"/>
</dbReference>
<dbReference type="PROSITE" id="PS00548">
    <property type="entry name" value="RIBOSOMAL_S3"/>
    <property type="match status" value="1"/>
</dbReference>